<feature type="chain" id="PRO_0000239939" description="DNA replication licensing factor mcm2">
    <location>
        <begin position="1"/>
        <end position="884"/>
    </location>
</feature>
<feature type="domain" description="MCM">
    <location>
        <begin position="458"/>
        <end position="664"/>
    </location>
</feature>
<feature type="zinc finger region" description="C4-type" evidence="4">
    <location>
        <begin position="314"/>
        <end position="340"/>
    </location>
</feature>
<feature type="region of interest" description="Disordered" evidence="5">
    <location>
        <begin position="1"/>
        <end position="61"/>
    </location>
</feature>
<feature type="region of interest" description="Disordered" evidence="5">
    <location>
        <begin position="120"/>
        <end position="151"/>
    </location>
</feature>
<feature type="short sequence motif" description="Arginine finger">
    <location>
        <begin position="640"/>
        <end position="643"/>
    </location>
</feature>
<feature type="compositionally biased region" description="Polar residues" evidence="5">
    <location>
        <begin position="1"/>
        <end position="16"/>
    </location>
</feature>
<feature type="compositionally biased region" description="Acidic residues" evidence="5">
    <location>
        <begin position="47"/>
        <end position="58"/>
    </location>
</feature>
<feature type="binding site" evidence="2">
    <location>
        <position position="515"/>
    </location>
    <ligand>
        <name>ADP</name>
        <dbReference type="ChEBI" id="CHEBI:456216"/>
        <note>ligand shared with MCM6</note>
    </ligand>
</feature>
<feature type="binding site" evidence="2">
    <location>
        <position position="516"/>
    </location>
    <ligand>
        <name>ADP</name>
        <dbReference type="ChEBI" id="CHEBI:456216"/>
        <note>ligand shared with MCM6</note>
    </ligand>
</feature>
<accession>Q6DIH3</accession>
<comment type="function">
    <text evidence="2">Acts as a component of the MCM2-7 complex (MCM complex) which is the replicative helicase essential for 'once per cell cycle' DNA replication initiation and elongation in eukaryotic cells. Core component of CDC45-MCM-GINS (CMG) helicase, the molecular machine that unwinds template DNA during replication, and around which the replisome is built. The active ATPase sites in the MCM2-7 ring are formed through the interaction surfaces of two neighboring subunits such that a critical structure of a conserved arginine finger motif is provided in trans relative to the ATP-binding site of the Walker A box of the adjacent subunit. The six ATPase active sites, however, are likely to contribute differentially to the complex helicase activity. Required for the entry in S phase and for cell division.</text>
</comment>
<comment type="catalytic activity">
    <reaction evidence="2">
        <text>ATP + H2O = ADP + phosphate + H(+)</text>
        <dbReference type="Rhea" id="RHEA:13065"/>
        <dbReference type="ChEBI" id="CHEBI:15377"/>
        <dbReference type="ChEBI" id="CHEBI:15378"/>
        <dbReference type="ChEBI" id="CHEBI:30616"/>
        <dbReference type="ChEBI" id="CHEBI:43474"/>
        <dbReference type="ChEBI" id="CHEBI:456216"/>
        <dbReference type="EC" id="3.6.4.12"/>
    </reaction>
    <physiologicalReaction direction="left-to-right" evidence="2">
        <dbReference type="Rhea" id="RHEA:13066"/>
    </physiologicalReaction>
</comment>
<comment type="subunit">
    <text evidence="2 3">Component of the mcm2-7 complex (RLF-M). The complex forms a toroidal hexameric ring with the proposed subunit order mcm2-mcm6-mcm4-mcm7-mcm3-mcm5 (By similarity). Component of the replisome complex (By similarity). Component of the CMG helicase complex, composed of the mcm2-7 complex, the GINS complex and cdc45 (By similarity).</text>
</comment>
<comment type="subcellular location">
    <subcellularLocation>
        <location evidence="1">Nucleus</location>
    </subcellularLocation>
    <subcellularLocation>
        <location evidence="1">Chromosome</location>
    </subcellularLocation>
    <text evidence="1">Associated with chromatin before the formation of nuclei and detaches from it as DNA replication progresses.</text>
</comment>
<comment type="PTM">
    <text evidence="2">May be in a phosphorylated state in the mitotic mcm complex. Phosphorylated in the interphase mcm complex. Phosphorylated by the cdc7-dbf4 and cdc7-dbf4b complexes (By similarity).</text>
</comment>
<comment type="miscellaneous">
    <text evidence="2">Early fractionation of eukaryotic MCM proteins yielded a variety of dimeric, trimeric and tetrameric complexes with unclear biological significance. Specifically a MCM467 subcomplex is shown to have in vitro helicase activity which is inhibited by the MCM2 subunit. The MCM2-7 hexamer is the proposed physiological active complex.</text>
</comment>
<comment type="similarity">
    <text evidence="4">Belongs to the MCM family.</text>
</comment>
<name>MCM2_XENTR</name>
<evidence type="ECO:0000250" key="1">
    <source>
        <dbReference type="UniProtKB" id="P25205"/>
    </source>
</evidence>
<evidence type="ECO:0000250" key="2">
    <source>
        <dbReference type="UniProtKB" id="P49736"/>
    </source>
</evidence>
<evidence type="ECO:0000250" key="3">
    <source>
        <dbReference type="UniProtKB" id="P55861"/>
    </source>
</evidence>
<evidence type="ECO:0000255" key="4"/>
<evidence type="ECO:0000256" key="5">
    <source>
        <dbReference type="SAM" id="MobiDB-lite"/>
    </source>
</evidence>
<evidence type="ECO:0000312" key="6">
    <source>
        <dbReference type="EMBL" id="AAH75567.1"/>
    </source>
</evidence>
<dbReference type="EC" id="3.6.4.12" evidence="2"/>
<dbReference type="EMBL" id="BC075567">
    <property type="protein sequence ID" value="AAH75567.1"/>
    <property type="molecule type" value="mRNA"/>
</dbReference>
<dbReference type="RefSeq" id="NP_001006772.1">
    <property type="nucleotide sequence ID" value="NM_001006771.1"/>
</dbReference>
<dbReference type="SMR" id="Q6DIH3"/>
<dbReference type="FunCoup" id="Q6DIH3">
    <property type="interactions" value="2509"/>
</dbReference>
<dbReference type="STRING" id="8364.ENSXETP00000021146"/>
<dbReference type="PaxDb" id="8364-ENSXETP00000060521"/>
<dbReference type="GeneID" id="448458"/>
<dbReference type="KEGG" id="xtr:448458"/>
<dbReference type="AGR" id="Xenbase:XB-GENE-999974"/>
<dbReference type="CTD" id="4171"/>
<dbReference type="Xenbase" id="XB-GENE-999974">
    <property type="gene designation" value="mcm2"/>
</dbReference>
<dbReference type="eggNOG" id="KOG0477">
    <property type="taxonomic scope" value="Eukaryota"/>
</dbReference>
<dbReference type="InParanoid" id="Q6DIH3"/>
<dbReference type="OMA" id="TYERVTT"/>
<dbReference type="OrthoDB" id="844at2759"/>
<dbReference type="Reactome" id="R-XTR-68867">
    <property type="pathway name" value="Assembly of the pre-replicative complex"/>
</dbReference>
<dbReference type="Reactome" id="R-XTR-68949">
    <property type="pathway name" value="Orc1 removal from chromatin"/>
</dbReference>
<dbReference type="Reactome" id="R-XTR-68962">
    <property type="pathway name" value="Activation of the pre-replicative complex"/>
</dbReference>
<dbReference type="Reactome" id="R-XTR-69052">
    <property type="pathway name" value="Switching of origins to a post-replicative state"/>
</dbReference>
<dbReference type="Proteomes" id="UP000008143">
    <property type="component" value="Chromosome 4"/>
</dbReference>
<dbReference type="Bgee" id="ENSXETG00000002059">
    <property type="expression patterns" value="Expressed in ovary and 17 other cell types or tissues"/>
</dbReference>
<dbReference type="GO" id="GO:0000785">
    <property type="term" value="C:chromatin"/>
    <property type="evidence" value="ECO:0000250"/>
    <property type="project" value="UniProtKB"/>
</dbReference>
<dbReference type="GO" id="GO:0071162">
    <property type="term" value="C:CMG complex"/>
    <property type="evidence" value="ECO:0000250"/>
    <property type="project" value="UniProtKB"/>
</dbReference>
<dbReference type="GO" id="GO:0042555">
    <property type="term" value="C:MCM complex"/>
    <property type="evidence" value="ECO:0000250"/>
    <property type="project" value="UniProtKB"/>
</dbReference>
<dbReference type="GO" id="GO:0005524">
    <property type="term" value="F:ATP binding"/>
    <property type="evidence" value="ECO:0007669"/>
    <property type="project" value="UniProtKB-KW"/>
</dbReference>
<dbReference type="GO" id="GO:0016887">
    <property type="term" value="F:ATP hydrolysis activity"/>
    <property type="evidence" value="ECO:0007669"/>
    <property type="project" value="RHEA"/>
</dbReference>
<dbReference type="GO" id="GO:0003677">
    <property type="term" value="F:DNA binding"/>
    <property type="evidence" value="ECO:0007669"/>
    <property type="project" value="UniProtKB-KW"/>
</dbReference>
<dbReference type="GO" id="GO:0004386">
    <property type="term" value="F:helicase activity"/>
    <property type="evidence" value="ECO:0007669"/>
    <property type="project" value="UniProtKB-KW"/>
</dbReference>
<dbReference type="GO" id="GO:0008270">
    <property type="term" value="F:zinc ion binding"/>
    <property type="evidence" value="ECO:0007669"/>
    <property type="project" value="UniProtKB-KW"/>
</dbReference>
<dbReference type="GO" id="GO:0044786">
    <property type="term" value="P:cell cycle DNA replication"/>
    <property type="evidence" value="ECO:0000250"/>
    <property type="project" value="UniProtKB"/>
</dbReference>
<dbReference type="GO" id="GO:0006270">
    <property type="term" value="P:DNA replication initiation"/>
    <property type="evidence" value="ECO:0007669"/>
    <property type="project" value="InterPro"/>
</dbReference>
<dbReference type="GO" id="GO:0030174">
    <property type="term" value="P:regulation of DNA-templated DNA replication initiation"/>
    <property type="evidence" value="ECO:0000250"/>
    <property type="project" value="UniProtKB"/>
</dbReference>
<dbReference type="CDD" id="cd17753">
    <property type="entry name" value="MCM2"/>
    <property type="match status" value="1"/>
</dbReference>
<dbReference type="FunFam" id="2.20.28.10:FF:000002">
    <property type="entry name" value="DNA helicase"/>
    <property type="match status" value="1"/>
</dbReference>
<dbReference type="FunFam" id="3.30.1640.10:FF:000005">
    <property type="entry name" value="DNA helicase"/>
    <property type="match status" value="1"/>
</dbReference>
<dbReference type="FunFam" id="3.40.50.300:FF:000138">
    <property type="entry name" value="DNA helicase"/>
    <property type="match status" value="1"/>
</dbReference>
<dbReference type="Gene3D" id="2.20.28.10">
    <property type="match status" value="1"/>
</dbReference>
<dbReference type="Gene3D" id="3.30.1640.10">
    <property type="entry name" value="mini-chromosome maintenance (MCM) complex, chain A, domain 1"/>
    <property type="match status" value="1"/>
</dbReference>
<dbReference type="Gene3D" id="2.40.50.140">
    <property type="entry name" value="Nucleic acid-binding proteins"/>
    <property type="match status" value="1"/>
</dbReference>
<dbReference type="Gene3D" id="3.40.50.300">
    <property type="entry name" value="P-loop containing nucleotide triphosphate hydrolases"/>
    <property type="match status" value="1"/>
</dbReference>
<dbReference type="InterPro" id="IPR031327">
    <property type="entry name" value="MCM"/>
</dbReference>
<dbReference type="InterPro" id="IPR008045">
    <property type="entry name" value="MCM2"/>
</dbReference>
<dbReference type="InterPro" id="IPR018525">
    <property type="entry name" value="MCM_CS"/>
</dbReference>
<dbReference type="InterPro" id="IPR001208">
    <property type="entry name" value="MCM_dom"/>
</dbReference>
<dbReference type="InterPro" id="IPR041562">
    <property type="entry name" value="MCM_lid"/>
</dbReference>
<dbReference type="InterPro" id="IPR027925">
    <property type="entry name" value="MCM_N"/>
</dbReference>
<dbReference type="InterPro" id="IPR033762">
    <property type="entry name" value="MCM_OB"/>
</dbReference>
<dbReference type="InterPro" id="IPR012340">
    <property type="entry name" value="NA-bd_OB-fold"/>
</dbReference>
<dbReference type="InterPro" id="IPR027417">
    <property type="entry name" value="P-loop_NTPase"/>
</dbReference>
<dbReference type="PANTHER" id="PTHR11630">
    <property type="entry name" value="DNA REPLICATION LICENSING FACTOR MCM FAMILY MEMBER"/>
    <property type="match status" value="1"/>
</dbReference>
<dbReference type="PANTHER" id="PTHR11630:SF44">
    <property type="entry name" value="DNA REPLICATION LICENSING FACTOR MCM2"/>
    <property type="match status" value="1"/>
</dbReference>
<dbReference type="Pfam" id="PF00493">
    <property type="entry name" value="MCM"/>
    <property type="match status" value="1"/>
</dbReference>
<dbReference type="Pfam" id="PF12619">
    <property type="entry name" value="MCM2_N"/>
    <property type="match status" value="1"/>
</dbReference>
<dbReference type="Pfam" id="PF17855">
    <property type="entry name" value="MCM_lid"/>
    <property type="match status" value="1"/>
</dbReference>
<dbReference type="Pfam" id="PF14551">
    <property type="entry name" value="MCM_N"/>
    <property type="match status" value="1"/>
</dbReference>
<dbReference type="Pfam" id="PF17207">
    <property type="entry name" value="MCM_OB"/>
    <property type="match status" value="1"/>
</dbReference>
<dbReference type="Pfam" id="PF23669">
    <property type="entry name" value="WH_MCM2"/>
    <property type="match status" value="1"/>
</dbReference>
<dbReference type="PRINTS" id="PR01657">
    <property type="entry name" value="MCMFAMILY"/>
</dbReference>
<dbReference type="PRINTS" id="PR01658">
    <property type="entry name" value="MCMPROTEIN2"/>
</dbReference>
<dbReference type="SMART" id="SM00350">
    <property type="entry name" value="MCM"/>
    <property type="match status" value="1"/>
</dbReference>
<dbReference type="SUPFAM" id="SSF50249">
    <property type="entry name" value="Nucleic acid-binding proteins"/>
    <property type="match status" value="1"/>
</dbReference>
<dbReference type="SUPFAM" id="SSF52540">
    <property type="entry name" value="P-loop containing nucleoside triphosphate hydrolases"/>
    <property type="match status" value="1"/>
</dbReference>
<dbReference type="PROSITE" id="PS00847">
    <property type="entry name" value="MCM_1"/>
    <property type="match status" value="1"/>
</dbReference>
<dbReference type="PROSITE" id="PS50051">
    <property type="entry name" value="MCM_2"/>
    <property type="match status" value="1"/>
</dbReference>
<gene>
    <name evidence="6" type="primary">mcm2</name>
</gene>
<protein>
    <recommendedName>
        <fullName>DNA replication licensing factor mcm2</fullName>
        <ecNumber evidence="2">3.6.4.12</ecNumber>
    </recommendedName>
    <alternativeName>
        <fullName>Minichromosome maintenance protein 2</fullName>
    </alternativeName>
</protein>
<proteinExistence type="evidence at transcript level"/>
<reference evidence="6" key="1">
    <citation type="submission" date="2004-06" db="EMBL/GenBank/DDBJ databases">
        <authorList>
            <consortium name="NIH - Xenopus Gene Collection (XGC) project"/>
        </authorList>
    </citation>
    <scope>NUCLEOTIDE SEQUENCE [LARGE SCALE MRNA]</scope>
    <source>
        <tissue>Neurula</tissue>
    </source>
</reference>
<organism>
    <name type="scientific">Xenopus tropicalis</name>
    <name type="common">Western clawed frog</name>
    <name type="synonym">Silurana tropicalis</name>
    <dbReference type="NCBI Taxonomy" id="8364"/>
    <lineage>
        <taxon>Eukaryota</taxon>
        <taxon>Metazoa</taxon>
        <taxon>Chordata</taxon>
        <taxon>Craniata</taxon>
        <taxon>Vertebrata</taxon>
        <taxon>Euteleostomi</taxon>
        <taxon>Amphibia</taxon>
        <taxon>Batrachia</taxon>
        <taxon>Anura</taxon>
        <taxon>Pipoidea</taxon>
        <taxon>Pipidae</taxon>
        <taxon>Xenopodinae</taxon>
        <taxon>Xenopus</taxon>
        <taxon>Silurana</taxon>
    </lineage>
</organism>
<keyword id="KW-0067">ATP-binding</keyword>
<keyword id="KW-0131">Cell cycle</keyword>
<keyword id="KW-0158">Chromosome</keyword>
<keyword id="KW-0235">DNA replication</keyword>
<keyword id="KW-0238">DNA-binding</keyword>
<keyword id="KW-0347">Helicase</keyword>
<keyword id="KW-0378">Hydrolase</keyword>
<keyword id="KW-0479">Metal-binding</keyword>
<keyword id="KW-0547">Nucleotide-binding</keyword>
<keyword id="KW-0539">Nucleus</keyword>
<keyword id="KW-0597">Phosphoprotein</keyword>
<keyword id="KW-1185">Reference proteome</keyword>
<keyword id="KW-0862">Zinc</keyword>
<keyword id="KW-0863">Zinc-finger</keyword>
<sequence length="884" mass="100116">MADSSESFNIATSPRTGSRRDALTSSPGRDLPPFEDESEGMFGDEVPREEEEDGEELIGDAMERDYRAISELDRYEAEGLDDEDDVEDLTASQRDAAEQAMRMRDREMGHELGRMRRGLLYDSDEEDEDRPARKRRMAERAAEGAPEEDEEMIESIENLEDMKGHTVREWVSMAATRLEIYHRFKNFLRTHVDEHGHNVFKEKISDMCKENKESLVVNYEDLAAREHVLAYFLPEAPAEMLKIFDEAAKEVVLVMYPKYDRIAREIHVRISHLPLVEELRSLRQLHLNQLIRTSGVVTCCTGVLPQLSMVKYNCNKCNFILGPFFQSQNQEVKPGSCPECQSLGPFEINMEETVYQNYQRITIQESPGKVAAGRLPRSKDAILLADLVDSCKPGDEIELTGTYHNNYDGSLNTANGFPVFATVILANHITKKDDKVAVGELTDEDVKAIVALSKDERIGERIFASIAPSIYGHEDIKRGLALALFGGEAKNPGGKHKVRGDINVLLCGDPGTAKSQFLKYVEKVASRAVFTTGQGASAVGLTAYVQRHPVTKEWTLEAGALVLADRGVCLIDEFDKMNDQDRTSIHEAMEQQSISISKAGIVTSLQARCTIIAASNPIGGRYDPSLTFSENVDLTEPIVSRFDILCVVRDTVDPVQDEMLARFVVGSHIKHHPSSKDIANGEEFALPNTFGVEPLPQEVLKKYIMYSKEKIHPKLNQMDQDKVAKMYSDLRKESMATGSIPITVRHIESMIRMAEAHARMHLRDYVVEDDVNMAIRVMLESFIDTQKFSVMRSMRKTFARYLAFRRDNNELLLFVLKQLVAEQTSYQRNRYGAQQDTIEVPEKDLVDKARQINIHNLSAFYDSDLFKMNRFTHDVKKKMIIQQF</sequence>